<evidence type="ECO:0000250" key="1"/>
<evidence type="ECO:0000269" key="2">
    <source>
    </source>
</evidence>
<evidence type="ECO:0000305" key="3"/>
<comment type="function">
    <text evidence="2">Mediates the conversion of geranyl diphosphate into alpha-terpineol, a monoterpenol. Monoterpenols contribute to the final grape and wine aroma and flavor. Also forms some 1,8-cineole and traces of other monoterpenoids.</text>
</comment>
<comment type="catalytic activity">
    <reaction evidence="2">
        <text>(2E)-geranyl diphosphate + H2O = (S)-alpha-terpineol + diphosphate</text>
        <dbReference type="Rhea" id="RHEA:32551"/>
        <dbReference type="ChEBI" id="CHEBI:128"/>
        <dbReference type="ChEBI" id="CHEBI:15377"/>
        <dbReference type="ChEBI" id="CHEBI:33019"/>
        <dbReference type="ChEBI" id="CHEBI:58057"/>
        <dbReference type="EC" id="4.2.3.111"/>
    </reaction>
</comment>
<comment type="cofactor">
    <cofactor evidence="1">
        <name>Mg(2+)</name>
        <dbReference type="ChEBI" id="CHEBI:18420"/>
    </cofactor>
    <text evidence="1">Binds 3 Mg(2+) ions per subunit.</text>
</comment>
<comment type="pathway">
    <text>Secondary metabolite biosynthesis; terpenoid biosynthesis.</text>
</comment>
<comment type="domain">
    <text evidence="1">The Asp-Asp-Xaa-Xaa-Asp/Glu (DDXXD/E) motif is important for the catalytic activity, presumably through binding to Mg(2+).</text>
</comment>
<comment type="similarity">
    <text evidence="3">Belongs to the terpene synthase family.</text>
</comment>
<protein>
    <recommendedName>
        <fullName>(-)-alpha-terpineol synthase</fullName>
        <ecNumber>4.2.3.111</ecNumber>
    </recommendedName>
</protein>
<sequence length="590" mass="68883">MALSMLSSIPNLITHTRLPIIIKSSSCKASPRGIKVKIGNSNCEEIIVRRTANYHPTIWDYDYVQSLRSDYVGETYTRRLDKLKRDVKPMLGKVKKPLDQLELIDVLQRLGIYYHFKDEIKRILNGIYNQYNRHEEWQKDDLYATALEFRLLRQHGYDVPQDVFSRFKDDTGSFKACLCEDMKGMLCLYEASYLCVQGESTMEQARDFAHRHLGKGLEQNIDQNLAIEVKHALELPLHWRMPRLEARWFIDVYEKRQDMNPILLEFAKLDFNMVQATHQEDLRHMSSWWSSTRLGEKLNFARDRLMENFLWTVGVIFEPQYGYCRRMSTKVNTLITIIDDVYDVYGTMDELELFTDVVDRWDINAMDPLPEYMKLCFLALYNSTNEMAYDALKEHGLHIVSYLRKAWSDLCKSYLLEAKWYYSRYTPSLQEYISNSWISISGPVILVHAYFLVANPITKEALQSLERYHNIIRWSSMILRLSDDLGTSLDELKRGDVPKSIQCYMYETGASEEDARKHTSYLIGETWKKLNEDGAVESPFPETFIGIAMNLARMAQCMYQHGDGHGIEYGETEDRVLSLLVEPIPSLSSE</sequence>
<dbReference type="EC" id="4.2.3.111"/>
<dbReference type="EMBL" id="AY572986">
    <property type="protein sequence ID" value="AAS79351.1"/>
    <property type="molecule type" value="mRNA"/>
</dbReference>
<dbReference type="EMBL" id="AY572987">
    <property type="protein sequence ID" value="AAS79352.1"/>
    <property type="molecule type" value="mRNA"/>
</dbReference>
<dbReference type="RefSeq" id="NP_001268216.1">
    <property type="nucleotide sequence ID" value="NM_001281287.1"/>
</dbReference>
<dbReference type="SMR" id="Q6PWU2"/>
<dbReference type="PaxDb" id="29760-VIT_13s0067g00370.t01"/>
<dbReference type="GeneID" id="100232956"/>
<dbReference type="KEGG" id="vvi:100232956"/>
<dbReference type="eggNOG" id="ENOG502QUH3">
    <property type="taxonomic scope" value="Eukaryota"/>
</dbReference>
<dbReference type="OrthoDB" id="189586at71240"/>
<dbReference type="BRENDA" id="4.2.3.111">
    <property type="organism ID" value="6671"/>
</dbReference>
<dbReference type="UniPathway" id="UPA00213"/>
<dbReference type="ExpressionAtlas" id="Q6PWU2">
    <property type="expression patterns" value="baseline"/>
</dbReference>
<dbReference type="GO" id="GO:0000287">
    <property type="term" value="F:magnesium ion binding"/>
    <property type="evidence" value="ECO:0007669"/>
    <property type="project" value="InterPro"/>
</dbReference>
<dbReference type="GO" id="GO:0010333">
    <property type="term" value="F:terpene synthase activity"/>
    <property type="evidence" value="ECO:0007669"/>
    <property type="project" value="InterPro"/>
</dbReference>
<dbReference type="GO" id="GO:0016102">
    <property type="term" value="P:diterpenoid biosynthetic process"/>
    <property type="evidence" value="ECO:0007669"/>
    <property type="project" value="InterPro"/>
</dbReference>
<dbReference type="CDD" id="cd00684">
    <property type="entry name" value="Terpene_cyclase_plant_C1"/>
    <property type="match status" value="1"/>
</dbReference>
<dbReference type="FunFam" id="1.10.600.10:FF:000007">
    <property type="entry name" value="Isoprene synthase, chloroplastic"/>
    <property type="match status" value="1"/>
</dbReference>
<dbReference type="FunFam" id="1.50.10.130:FF:000001">
    <property type="entry name" value="Isoprene synthase, chloroplastic"/>
    <property type="match status" value="1"/>
</dbReference>
<dbReference type="Gene3D" id="1.10.600.10">
    <property type="entry name" value="Farnesyl Diphosphate Synthase"/>
    <property type="match status" value="1"/>
</dbReference>
<dbReference type="Gene3D" id="1.50.10.130">
    <property type="entry name" value="Terpene synthase, N-terminal domain"/>
    <property type="match status" value="1"/>
</dbReference>
<dbReference type="InterPro" id="IPR008949">
    <property type="entry name" value="Isoprenoid_synthase_dom_sf"/>
</dbReference>
<dbReference type="InterPro" id="IPR034741">
    <property type="entry name" value="Terpene_cyclase-like_1_C"/>
</dbReference>
<dbReference type="InterPro" id="IPR044814">
    <property type="entry name" value="Terpene_cyclase_plant_C1"/>
</dbReference>
<dbReference type="InterPro" id="IPR001906">
    <property type="entry name" value="Terpene_synth_N"/>
</dbReference>
<dbReference type="InterPro" id="IPR036965">
    <property type="entry name" value="Terpene_synth_N_sf"/>
</dbReference>
<dbReference type="InterPro" id="IPR050148">
    <property type="entry name" value="Terpene_synthase-like"/>
</dbReference>
<dbReference type="InterPro" id="IPR005630">
    <property type="entry name" value="Terpene_synthase_metal-bd"/>
</dbReference>
<dbReference type="InterPro" id="IPR008930">
    <property type="entry name" value="Terpenoid_cyclase/PrenylTrfase"/>
</dbReference>
<dbReference type="PANTHER" id="PTHR31225">
    <property type="entry name" value="OS04G0344100 PROTEIN-RELATED"/>
    <property type="match status" value="1"/>
</dbReference>
<dbReference type="PANTHER" id="PTHR31225:SF9">
    <property type="entry name" value="TERPENE SYNTHASE 10"/>
    <property type="match status" value="1"/>
</dbReference>
<dbReference type="Pfam" id="PF01397">
    <property type="entry name" value="Terpene_synth"/>
    <property type="match status" value="1"/>
</dbReference>
<dbReference type="Pfam" id="PF03936">
    <property type="entry name" value="Terpene_synth_C"/>
    <property type="match status" value="1"/>
</dbReference>
<dbReference type="SFLD" id="SFLDG01019">
    <property type="entry name" value="Terpene_Cyclase_Like_1_C_Termi"/>
    <property type="match status" value="1"/>
</dbReference>
<dbReference type="SFLD" id="SFLDG01604">
    <property type="entry name" value="Terpene_Cyclase_Like_1_C_Termi"/>
    <property type="match status" value="1"/>
</dbReference>
<dbReference type="SFLD" id="SFLDG01014">
    <property type="entry name" value="Terpene_Cyclase_Like_1_N-term"/>
    <property type="match status" value="1"/>
</dbReference>
<dbReference type="SUPFAM" id="SSF48239">
    <property type="entry name" value="Terpenoid cyclases/Protein prenyltransferases"/>
    <property type="match status" value="1"/>
</dbReference>
<dbReference type="SUPFAM" id="SSF48576">
    <property type="entry name" value="Terpenoid synthases"/>
    <property type="match status" value="1"/>
</dbReference>
<proteinExistence type="evidence at protein level"/>
<accession>Q6PWU2</accession>
<accession>Q6PWU1</accession>
<keyword id="KW-0456">Lyase</keyword>
<keyword id="KW-0460">Magnesium</keyword>
<keyword id="KW-0479">Metal-binding</keyword>
<feature type="chain" id="PRO_0000418756" description="(-)-alpha-terpineol synthase">
    <location>
        <begin position="1"/>
        <end position="590"/>
    </location>
</feature>
<feature type="short sequence motif" description="DDXXD motif">
    <location>
        <begin position="339"/>
        <end position="343"/>
    </location>
</feature>
<feature type="binding site" evidence="1">
    <location>
        <position position="339"/>
    </location>
    <ligand>
        <name>Mg(2+)</name>
        <dbReference type="ChEBI" id="CHEBI:18420"/>
        <label>1</label>
    </ligand>
</feature>
<feature type="binding site" evidence="1">
    <location>
        <position position="339"/>
    </location>
    <ligand>
        <name>Mg(2+)</name>
        <dbReference type="ChEBI" id="CHEBI:18420"/>
        <label>2</label>
    </ligand>
</feature>
<feature type="binding site" evidence="1">
    <location>
        <position position="343"/>
    </location>
    <ligand>
        <name>Mg(2+)</name>
        <dbReference type="ChEBI" id="CHEBI:18420"/>
        <label>1</label>
    </ligand>
</feature>
<feature type="binding site" evidence="1">
    <location>
        <position position="343"/>
    </location>
    <ligand>
        <name>Mg(2+)</name>
        <dbReference type="ChEBI" id="CHEBI:18420"/>
        <label>2</label>
    </ligand>
</feature>
<feature type="binding site" evidence="1">
    <location>
        <position position="483"/>
    </location>
    <ligand>
        <name>Mg(2+)</name>
        <dbReference type="ChEBI" id="CHEBI:18420"/>
        <label>3</label>
    </ligand>
</feature>
<feature type="binding site" evidence="1">
    <location>
        <position position="487"/>
    </location>
    <ligand>
        <name>Mg(2+)</name>
        <dbReference type="ChEBI" id="CHEBI:18420"/>
        <label>3</label>
    </ligand>
</feature>
<feature type="binding site" evidence="1">
    <location>
        <position position="491"/>
    </location>
    <ligand>
        <name>Mg(2+)</name>
        <dbReference type="ChEBI" id="CHEBI:18420"/>
        <label>3</label>
    </ligand>
</feature>
<feature type="sequence conflict" description="In Ref. 1; AAS79352." evidence="3" ref="1">
    <original>G</original>
    <variation>S</variation>
    <location>
        <position position="126"/>
    </location>
</feature>
<feature type="sequence conflict" description="In Ref. 1; AAS79352." evidence="3" ref="1">
    <original>S</original>
    <variation>F</variation>
    <location>
        <position position="589"/>
    </location>
</feature>
<reference key="1">
    <citation type="journal article" date="2004" name="Phytochemistry">
        <title>Identification of Vitis vinifera (-)-alpha-terpineol synthase by in silico screening of full-length cDNA ESTs and functional characterization of recombinant terpene synthase.</title>
        <authorList>
            <person name="Martin D.M."/>
            <person name="Bohlmann J."/>
        </authorList>
    </citation>
    <scope>NUCLEOTIDE SEQUENCE [MRNA]</scope>
    <scope>FUNCTION</scope>
    <scope>CATALYTIC ACTIVITY</scope>
    <source>
        <strain>cv. Gewuerztraminer</strain>
    </source>
</reference>
<name>ATESY_VITVI</name>
<organism>
    <name type="scientific">Vitis vinifera</name>
    <name type="common">Grape</name>
    <dbReference type="NCBI Taxonomy" id="29760"/>
    <lineage>
        <taxon>Eukaryota</taxon>
        <taxon>Viridiplantae</taxon>
        <taxon>Streptophyta</taxon>
        <taxon>Embryophyta</taxon>
        <taxon>Tracheophyta</taxon>
        <taxon>Spermatophyta</taxon>
        <taxon>Magnoliopsida</taxon>
        <taxon>eudicotyledons</taxon>
        <taxon>Gunneridae</taxon>
        <taxon>Pentapetalae</taxon>
        <taxon>rosids</taxon>
        <taxon>Vitales</taxon>
        <taxon>Vitaceae</taxon>
        <taxon>Viteae</taxon>
        <taxon>Vitis</taxon>
    </lineage>
</organism>